<proteinExistence type="inferred from homology"/>
<organism>
    <name type="scientific">Candidozyma auris</name>
    <name type="common">Yeast</name>
    <name type="synonym">Candida auris</name>
    <dbReference type="NCBI Taxonomy" id="498019"/>
    <lineage>
        <taxon>Eukaryota</taxon>
        <taxon>Fungi</taxon>
        <taxon>Dikarya</taxon>
        <taxon>Ascomycota</taxon>
        <taxon>Saccharomycotina</taxon>
        <taxon>Pichiomycetes</taxon>
        <taxon>Metschnikowiaceae</taxon>
        <taxon>Candidozyma</taxon>
    </lineage>
</organism>
<protein>
    <recommendedName>
        <fullName evidence="5">Peptide transporter PTR_B</fullName>
    </recommendedName>
</protein>
<keyword id="KW-1003">Cell membrane</keyword>
<keyword id="KW-0325">Glycoprotein</keyword>
<keyword id="KW-0472">Membrane</keyword>
<keyword id="KW-0571">Peptide transport</keyword>
<keyword id="KW-0653">Protein transport</keyword>
<keyword id="KW-0812">Transmembrane</keyword>
<keyword id="KW-1133">Transmembrane helix</keyword>
<keyword id="KW-0813">Transport</keyword>
<accession>A0A2H0ZNJ6</accession>
<name>PTRB_CANAR</name>
<feature type="chain" id="PRO_0000459404" description="Peptide transporter PTR_B">
    <location>
        <begin position="1"/>
        <end position="580"/>
    </location>
</feature>
<feature type="transmembrane region" description="Helical" evidence="1">
    <location>
        <begin position="57"/>
        <end position="78"/>
    </location>
</feature>
<feature type="transmembrane region" description="Helical" evidence="1">
    <location>
        <begin position="107"/>
        <end position="127"/>
    </location>
</feature>
<feature type="transmembrane region" description="Helical" evidence="1">
    <location>
        <begin position="134"/>
        <end position="154"/>
    </location>
</feature>
<feature type="transmembrane region" description="Helical" evidence="1">
    <location>
        <begin position="163"/>
        <end position="183"/>
    </location>
</feature>
<feature type="transmembrane region" description="Helical" evidence="1">
    <location>
        <begin position="219"/>
        <end position="239"/>
    </location>
</feature>
<feature type="transmembrane region" description="Helical" evidence="1">
    <location>
        <begin position="249"/>
        <end position="269"/>
    </location>
</feature>
<feature type="transmembrane region" description="Helical" evidence="1">
    <location>
        <begin position="326"/>
        <end position="346"/>
    </location>
</feature>
<feature type="transmembrane region" description="Helical" evidence="1">
    <location>
        <begin position="370"/>
        <end position="390"/>
    </location>
</feature>
<feature type="transmembrane region" description="Helical" evidence="1">
    <location>
        <begin position="402"/>
        <end position="422"/>
    </location>
</feature>
<feature type="transmembrane region" description="Helical" evidence="1">
    <location>
        <begin position="449"/>
        <end position="469"/>
    </location>
</feature>
<feature type="transmembrane region" description="Helical" evidence="1">
    <location>
        <begin position="484"/>
        <end position="504"/>
    </location>
</feature>
<feature type="transmembrane region" description="Helical" evidence="1">
    <location>
        <begin position="513"/>
        <end position="533"/>
    </location>
</feature>
<feature type="region of interest" description="Disordered" evidence="3">
    <location>
        <begin position="1"/>
        <end position="45"/>
    </location>
</feature>
<feature type="compositionally biased region" description="Basic and acidic residues" evidence="3">
    <location>
        <begin position="1"/>
        <end position="30"/>
    </location>
</feature>
<feature type="glycosylation site" description="N-linked (GlcNAc...) asparagine" evidence="2">
    <location>
        <position position="101"/>
    </location>
</feature>
<evidence type="ECO:0000255" key="1"/>
<evidence type="ECO:0000255" key="2">
    <source>
        <dbReference type="PROSITE-ProRule" id="PRU00498"/>
    </source>
</evidence>
<evidence type="ECO:0000256" key="3">
    <source>
        <dbReference type="SAM" id="MobiDB-lite"/>
    </source>
</evidence>
<evidence type="ECO:0000269" key="4">
    <source>
    </source>
</evidence>
<evidence type="ECO:0000303" key="5">
    <source>
    </source>
</evidence>
<evidence type="ECO:0000305" key="6"/>
<evidence type="ECO:0000305" key="7">
    <source>
    </source>
</evidence>
<reference key="1">
    <citation type="journal article" date="2017" name="Clin. Infect. Dis.">
        <title>Simultaneous emergence of multidrug-resistant Candida auris on 3 continents confirmed by whole-genome sequencing and epidemiological analyses.</title>
        <authorList>
            <person name="Lockhart S.R."/>
            <person name="Etienne K.A."/>
            <person name="Vallabhaneni S."/>
            <person name="Farooqi J."/>
            <person name="Chowdhary A."/>
            <person name="Govender N.P."/>
            <person name="Colombo A.L."/>
            <person name="Calvo B."/>
            <person name="Cuomo C.A."/>
            <person name="Desjardins C.A."/>
            <person name="Berkow E.L."/>
            <person name="Castanheira M."/>
            <person name="Magobo R.E."/>
            <person name="Jabeen K."/>
            <person name="Asghar R.J."/>
            <person name="Meis J.F."/>
            <person name="Jackson B."/>
            <person name="Chiller T."/>
            <person name="Litvintseva A.P."/>
        </authorList>
    </citation>
    <scope>NUCLEOTIDE SEQUENCE [LARGE SCALE GENOMIC DNA]</scope>
    <source>
        <strain>B8441</strain>
    </source>
</reference>
<reference key="2">
    <citation type="journal article" date="2022" name="Appl. Microbiol. Biotechnol.">
        <title>Genome-wide analysis of PTR transporters in Candida species and their functional characterization in Candida auris.</title>
        <authorList>
            <person name="Khatoon R."/>
            <person name="Sharma S."/>
            <person name="Prasad R."/>
            <person name="Lynn A.M."/>
            <person name="Prakash A."/>
            <person name="Banerjee A."/>
        </authorList>
    </citation>
    <scope>FUNCTION</scope>
    <scope>TRANSPORTER ACTIVITY</scope>
    <scope>DISRUPTION PHENOTYPE</scope>
</reference>
<comment type="function">
    <text evidence="4">Peptide transporter that exploits the inwardly directed proton motive force to facilitate the cellular uptake of di/tripeptides (PubMed:35648145). Shows strong uptake specificity towards the dipeptides Tyr-Phe and Gly-His, when compared to PTR_A and PTR_C (PubMed:35648145).</text>
</comment>
<comment type="catalytic activity">
    <reaction evidence="4">
        <text>a dipeptide(out) + H(+)(out) = a dipeptide(in) + H(+)(in)</text>
        <dbReference type="Rhea" id="RHEA:64392"/>
        <dbReference type="ChEBI" id="CHEBI:15378"/>
        <dbReference type="ChEBI" id="CHEBI:90799"/>
    </reaction>
    <physiologicalReaction direction="left-to-right" evidence="4">
        <dbReference type="Rhea" id="RHEA:64393"/>
    </physiologicalReaction>
</comment>
<comment type="catalytic activity">
    <reaction evidence="4">
        <text>an L-amino acid tripeptide(out) + H(+)(out) = an L-amino acid tripeptide(in) + H(+)(in)</text>
        <dbReference type="Rhea" id="RHEA:64400"/>
        <dbReference type="ChEBI" id="CHEBI:15378"/>
        <dbReference type="ChEBI" id="CHEBI:155837"/>
    </reaction>
    <physiologicalReaction direction="left-to-right" evidence="4">
        <dbReference type="Rhea" id="RHEA:64401"/>
    </physiologicalReaction>
</comment>
<comment type="subcellular location">
    <subcellularLocation>
        <location evidence="7">Cell membrane</location>
        <topology evidence="1">Multi-pass membrane protein</topology>
    </subcellularLocation>
</comment>
<comment type="disruption phenotype">
    <text evidence="4">Leads to a marked reduction in the transport capabilities of di/tripeptides.</text>
</comment>
<comment type="similarity">
    <text evidence="6">Belongs to the major facilitator superfamily. Proton-dependent oligopeptide transporter (POT/PTR) (TC 2.A.17) family.</text>
</comment>
<gene>
    <name evidence="5" type="primary">PTR_B</name>
    <name type="ORF">B9J08_003830</name>
</gene>
<dbReference type="EMBL" id="PEKT02000007">
    <property type="protein sequence ID" value="PIS52217.1"/>
    <property type="molecule type" value="Genomic_DNA"/>
</dbReference>
<dbReference type="RefSeq" id="XP_018171815.1">
    <property type="nucleotide sequence ID" value="XM_018310336.1"/>
</dbReference>
<dbReference type="SMR" id="A0A2H0ZNJ6"/>
<dbReference type="EnsemblFungi" id="B9J08_003830-t37_1">
    <property type="protein sequence ID" value="B9J08_003830-t37_1-p1"/>
    <property type="gene ID" value="B9J08_003830"/>
</dbReference>
<dbReference type="VEuPathDB" id="FungiDB:B9J08_003830"/>
<dbReference type="VEuPathDB" id="FungiDB:CJI96_0002361"/>
<dbReference type="VEuPathDB" id="FungiDB:CJI97_003903"/>
<dbReference type="VEuPathDB" id="FungiDB:CJJ07_002640"/>
<dbReference type="VEuPathDB" id="FungiDB:CJJ09_000278"/>
<dbReference type="VEuPathDB" id="FungiDB:QG37_00772"/>
<dbReference type="OMA" id="WMHGAEG"/>
<dbReference type="OrthoDB" id="8904098at2759"/>
<dbReference type="GO" id="GO:0005886">
    <property type="term" value="C:plasma membrane"/>
    <property type="evidence" value="ECO:0007669"/>
    <property type="project" value="UniProtKB-SubCell"/>
</dbReference>
<dbReference type="GO" id="GO:0022857">
    <property type="term" value="F:transmembrane transporter activity"/>
    <property type="evidence" value="ECO:0007669"/>
    <property type="project" value="InterPro"/>
</dbReference>
<dbReference type="GO" id="GO:0006857">
    <property type="term" value="P:oligopeptide transport"/>
    <property type="evidence" value="ECO:0007669"/>
    <property type="project" value="InterPro"/>
</dbReference>
<dbReference type="GO" id="GO:0015031">
    <property type="term" value="P:protein transport"/>
    <property type="evidence" value="ECO:0007669"/>
    <property type="project" value="UniProtKB-KW"/>
</dbReference>
<dbReference type="FunFam" id="1.20.1250.20:FF:000085">
    <property type="entry name" value="MFS peptide transporter Ptr2"/>
    <property type="match status" value="1"/>
</dbReference>
<dbReference type="Gene3D" id="1.20.1250.20">
    <property type="entry name" value="MFS general substrate transporter like domains"/>
    <property type="match status" value="1"/>
</dbReference>
<dbReference type="InterPro" id="IPR036259">
    <property type="entry name" value="MFS_trans_sf"/>
</dbReference>
<dbReference type="InterPro" id="IPR000109">
    <property type="entry name" value="POT_fam"/>
</dbReference>
<dbReference type="InterPro" id="IPR018456">
    <property type="entry name" value="PTR2_symporter_CS"/>
</dbReference>
<dbReference type="PANTHER" id="PTHR11654">
    <property type="entry name" value="OLIGOPEPTIDE TRANSPORTER-RELATED"/>
    <property type="match status" value="1"/>
</dbReference>
<dbReference type="Pfam" id="PF00854">
    <property type="entry name" value="PTR2"/>
    <property type="match status" value="1"/>
</dbReference>
<dbReference type="SUPFAM" id="SSF103473">
    <property type="entry name" value="MFS general substrate transporter"/>
    <property type="match status" value="1"/>
</dbReference>
<dbReference type="PROSITE" id="PS01023">
    <property type="entry name" value="PTR2_2"/>
    <property type="match status" value="1"/>
</dbReference>
<sequence>MSTEKLQNDDKVVDEKYVDADEHSLVRSQDESFPQTEEGGEPTDHEMKTLRRVARKIPMSCWLVAIVELSERFTYYGLSTPFQNYMQGTRDSTPKGVLGLNQSGATALSYFWQFWCYVTPIFGAWIADTYLGKYFTICIFCIVMMVGIFILFITSLPSIASETTSLAGFIVAVIVIGIGTGGIKSNVSPLIADQIPKERPSIKVLKSGERVIEDPSITVSNVFMFFYLMINIGALSVIATTELEHHVDFWAAFLLPLCFFCVGILALVLGKNKYVKVPVGEKVIARSFKCAFIALSKLNFDAARPSHHPDREFPWDDAFVDEVQRALYACKVFAFYPIYWLVYGQMNNNFVSQAGQMELHGLPNDILQAINSITLIIFIPICERIVYPFIRRYTPFRAVTKIFWGFMFGAAAMVYAGVLQHFIYKAGPCYYFPMACDPQYKNVPNHIHIALQTPCYWLIGMSEIFASITGLEYAYTKAPVTMKSFIMSIFLLMNAFGSALGIALSPVSEDPKMVWTFNGLGVSCFIAGWIFWFTYKHYNYREDEWNNLEYRHEDLYHPTETRDPELEPVVSLTRSFKQYA</sequence>